<comment type="subcellular location">
    <subcellularLocation>
        <location evidence="1">Secreted</location>
    </subcellularLocation>
</comment>
<comment type="tissue specificity">
    <text evidence="4">Expressed by the skin glands.</text>
</comment>
<comment type="mass spectrometry" mass="1524.0" method="MALDI" evidence="1"/>
<protein>
    <recommendedName>
        <fullName evidence="2">Caerulein precursor fragment-related peptide BM4</fullName>
    </recommendedName>
    <alternativeName>
        <fullName evidence="2">CPF-RP-BM4</fullName>
    </alternativeName>
</protein>
<name>CRBM4_XENBM</name>
<organism evidence="2">
    <name type="scientific">Xenopus boumbaensis</name>
    <name type="common">Mawa clawed frog</name>
    <dbReference type="NCBI Taxonomy" id="288550"/>
    <lineage>
        <taxon>Eukaryota</taxon>
        <taxon>Metazoa</taxon>
        <taxon>Chordata</taxon>
        <taxon>Craniata</taxon>
        <taxon>Vertebrata</taxon>
        <taxon>Euteleostomi</taxon>
        <taxon>Amphibia</taxon>
        <taxon>Batrachia</taxon>
        <taxon>Anura</taxon>
        <taxon>Pipoidea</taxon>
        <taxon>Pipidae</taxon>
        <taxon>Xenopodinae</taxon>
        <taxon>Xenopus</taxon>
        <taxon>Xenopus</taxon>
    </lineage>
</organism>
<reference evidence="3" key="1">
    <citation type="journal article" date="2015" name="Peptides">
        <title>Host-defense and trefoil factor family peptides in skin secretions of the Mawa clawed frog Xenopus boumbaensis (Pipidae).</title>
        <authorList>
            <person name="Conlon J.M."/>
            <person name="Mechkarska M."/>
            <person name="Kolodziejek J."/>
            <person name="Leprince J."/>
            <person name="Coquet L."/>
            <person name="Jouenne T."/>
            <person name="Vaudry H."/>
            <person name="Nowotny N."/>
            <person name="King J.D."/>
        </authorList>
    </citation>
    <scope>PROTEIN SEQUENCE</scope>
    <scope>SUBCELLULAR LOCATION</scope>
    <scope>MASS SPECTROMETRY</scope>
    <scope>AMIDATION AT VAL-17</scope>
    <source>
        <tissue evidence="2">Skin secretion</tissue>
    </source>
</reference>
<dbReference type="GO" id="GO:0005576">
    <property type="term" value="C:extracellular region"/>
    <property type="evidence" value="ECO:0007669"/>
    <property type="project" value="UniProtKB-SubCell"/>
</dbReference>
<accession>C0HKL3</accession>
<evidence type="ECO:0000269" key="1">
    <source>
    </source>
</evidence>
<evidence type="ECO:0000303" key="2">
    <source>
    </source>
</evidence>
<evidence type="ECO:0000305" key="3"/>
<evidence type="ECO:0000305" key="4">
    <source>
    </source>
</evidence>
<proteinExistence type="evidence at protein level"/>
<sequence length="17" mass="1525">GIGSALANAAKLVAGIV</sequence>
<feature type="peptide" id="PRO_0000440788" description="Caerulein precursor fragment-related peptide BM4" evidence="1">
    <location>
        <begin position="1"/>
        <end position="17"/>
    </location>
</feature>
<feature type="modified residue" description="Valine amide" evidence="1">
    <location>
        <position position="17"/>
    </location>
</feature>
<keyword id="KW-0027">Amidation</keyword>
<keyword id="KW-0903">Direct protein sequencing</keyword>
<keyword id="KW-0964">Secreted</keyword>